<accession>Q8LTD0</accession>
<name>SPAN2_BPP2</name>
<gene>
    <name type="primary">lysC</name>
</gene>
<organismHost>
    <name type="scientific">Enterobacteriaceae</name>
    <dbReference type="NCBI Taxonomy" id="543"/>
</organismHost>
<dbReference type="EMBL" id="AF063097">
    <property type="protein sequence ID" value="AAM83596.1"/>
    <property type="molecule type" value="Genomic_DNA"/>
</dbReference>
<dbReference type="RefSeq" id="NP_757382.1">
    <property type="nucleotide sequence ID" value="NC_001895.1"/>
</dbReference>
<dbReference type="SMR" id="Q8LTD0"/>
<dbReference type="GeneID" id="77440799"/>
<dbReference type="KEGG" id="vg:77440799"/>
<dbReference type="Proteomes" id="UP000009092">
    <property type="component" value="Genome"/>
</dbReference>
<dbReference type="GO" id="GO:0020002">
    <property type="term" value="C:host cell plasma membrane"/>
    <property type="evidence" value="ECO:0007669"/>
    <property type="project" value="UniProtKB-SubCell"/>
</dbReference>
<dbReference type="GO" id="GO:0016020">
    <property type="term" value="C:membrane"/>
    <property type="evidence" value="ECO:0007669"/>
    <property type="project" value="UniProtKB-KW"/>
</dbReference>
<dbReference type="GO" id="GO:0031640">
    <property type="term" value="P:killing of cells of another organism"/>
    <property type="evidence" value="ECO:0007669"/>
    <property type="project" value="UniProtKB-KW"/>
</dbReference>
<dbReference type="InterPro" id="IPR047737">
    <property type="entry name" value="LysC"/>
</dbReference>
<dbReference type="NCBIfam" id="NF038368">
    <property type="entry name" value="P2_Rz1"/>
    <property type="match status" value="1"/>
</dbReference>
<dbReference type="Pfam" id="PF23793">
    <property type="entry name" value="LysC"/>
    <property type="match status" value="1"/>
</dbReference>
<protein>
    <recommendedName>
        <fullName>Probable spanin, outer lipoprotein subunit</fullName>
    </recommendedName>
    <alternativeName>
        <fullName>Protein lysC</fullName>
    </alternativeName>
</protein>
<proteinExistence type="inferred from homology"/>
<feature type="signal peptide" evidence="2">
    <location>
        <begin position="1"/>
        <end position="24"/>
    </location>
</feature>
<feature type="chain" id="PRO_0000429263" description="Probable spanin, outer lipoprotein subunit">
    <location>
        <begin position="25"/>
        <end position="96"/>
    </location>
</feature>
<feature type="topological domain" description="Periplasmic" evidence="2">
    <location>
        <begin position="25"/>
        <end position="96"/>
    </location>
</feature>
<feature type="coiled-coil region" evidence="2">
    <location>
        <begin position="54"/>
        <end position="78"/>
    </location>
</feature>
<comment type="function">
    <text evidence="1">Component of the spanin complex that disrupts the host outer membrane and participates in cell lysis during virus exit. The spanin complex conducts the final step in host lysis by disrupting the outer membrane after holin and endolysin action have permeabilized the inner membrane and degraded the host peptidoglycans. Host outer membrane disruption is possibly due to local fusion between the inner and outer membrane performed by the spanin complex (By similarity).</text>
</comment>
<comment type="subunit">
    <text evidence="1">Interacts (via C-terminus) with the spanin inner membrane subunit (via C-terminus). Part of the spanin complex which spans the entire periplasmic space. The spanin complex is composed of spanin inner membrane subunit and spanin outer membrane subunit (By similarity).</text>
</comment>
<comment type="subcellular location">
    <subcellularLocation>
        <location evidence="1">Host cell outer membrane</location>
        <topology evidence="1">Lipid-anchor</topology>
        <orientation evidence="1">Periplasmic side</orientation>
    </subcellularLocation>
</comment>
<evidence type="ECO:0000250" key="1"/>
<evidence type="ECO:0000255" key="2"/>
<organism>
    <name type="scientific">Escherichia phage P2</name>
    <name type="common">Bacteriophage P2</name>
    <dbReference type="NCBI Taxonomy" id="2905681"/>
    <lineage>
        <taxon>Viruses</taxon>
        <taxon>Duplodnaviria</taxon>
        <taxon>Heunggongvirae</taxon>
        <taxon>Uroviricota</taxon>
        <taxon>Caudoviricetes</taxon>
        <taxon>Peduoviridae</taxon>
        <taxon>Peduovirus</taxon>
        <taxon>Peduovirus P2</taxon>
    </lineage>
</organism>
<sequence length="96" mass="10053">MRTKIFAAGTVLTCLMLCAGCTSAPPAPTPVIVPNACPKVSLCPMPGSDPQTNGDLSADIRQLENALARCASQVKMIKHCQDENDAQTRQPAQGAD</sequence>
<reference key="1">
    <citation type="submission" date="1998-05" db="EMBL/GenBank/DDBJ databases">
        <title>The complete genome of bacteriophage P2.</title>
        <authorList>
            <person name="Christie G.E."/>
            <person name="Haggard-Ljungquist E."/>
            <person name="Calendar R."/>
        </authorList>
    </citation>
    <scope>NUCLEOTIDE SEQUENCE [LARGE SCALE GENOMIC DNA]</scope>
</reference>
<keyword id="KW-0175">Coiled coil</keyword>
<keyword id="KW-0204">Cytolysis</keyword>
<keyword id="KW-0578">Host cell lysis by virus</keyword>
<keyword id="KW-1033">Host cell outer membrane</keyword>
<keyword id="KW-1043">Host membrane</keyword>
<keyword id="KW-0449">Lipoprotein</keyword>
<keyword id="KW-0472">Membrane</keyword>
<keyword id="KW-1185">Reference proteome</keyword>
<keyword id="KW-0732">Signal</keyword>
<keyword id="KW-1188">Viral release from host cell</keyword>